<dbReference type="EMBL" id="LT708304">
    <property type="protein sequence ID" value="SIU00623.1"/>
    <property type="molecule type" value="Genomic_DNA"/>
</dbReference>
<dbReference type="RefSeq" id="NP_855666.1">
    <property type="nucleotide sequence ID" value="NC_002945.3"/>
</dbReference>
<dbReference type="RefSeq" id="WP_003410017.1">
    <property type="nucleotide sequence ID" value="NC_002945.4"/>
</dbReference>
<dbReference type="SMR" id="P64914"/>
<dbReference type="KEGG" id="mbo:BQ2027_MB2016C"/>
<dbReference type="PATRIC" id="fig|233413.5.peg.2215"/>
<dbReference type="Proteomes" id="UP000001419">
    <property type="component" value="Chromosome"/>
</dbReference>
<dbReference type="InterPro" id="IPR009963">
    <property type="entry name" value="DUF1490"/>
</dbReference>
<dbReference type="Pfam" id="PF07371">
    <property type="entry name" value="DUF1490"/>
    <property type="match status" value="1"/>
</dbReference>
<sequence>MVTHELLVKAAGAVLTGLVGVSAYETLRKALGTAPIRRASVTVMEWGLRGTRRAEAAAESARLTVADVVAEARGRIGEEAPLPAGARVDE</sequence>
<feature type="chain" id="PRO_0000103921" description="Uncharacterized protein Mb2016c">
    <location>
        <begin position="1"/>
        <end position="90"/>
    </location>
</feature>
<keyword id="KW-1185">Reference proteome</keyword>
<proteinExistence type="predicted"/>
<organism>
    <name type="scientific">Mycobacterium bovis (strain ATCC BAA-935 / AF2122/97)</name>
    <dbReference type="NCBI Taxonomy" id="233413"/>
    <lineage>
        <taxon>Bacteria</taxon>
        <taxon>Bacillati</taxon>
        <taxon>Actinomycetota</taxon>
        <taxon>Actinomycetes</taxon>
        <taxon>Mycobacteriales</taxon>
        <taxon>Mycobacteriaceae</taxon>
        <taxon>Mycobacterium</taxon>
        <taxon>Mycobacterium tuberculosis complex</taxon>
    </lineage>
</organism>
<protein>
    <recommendedName>
        <fullName>Uncharacterized protein Mb2016c</fullName>
    </recommendedName>
</protein>
<name>Y2016_MYCBO</name>
<reference key="1">
    <citation type="journal article" date="2003" name="Proc. Natl. Acad. Sci. U.S.A.">
        <title>The complete genome sequence of Mycobacterium bovis.</title>
        <authorList>
            <person name="Garnier T."/>
            <person name="Eiglmeier K."/>
            <person name="Camus J.-C."/>
            <person name="Medina N."/>
            <person name="Mansoor H."/>
            <person name="Pryor M."/>
            <person name="Duthoy S."/>
            <person name="Grondin S."/>
            <person name="Lacroix C."/>
            <person name="Monsempe C."/>
            <person name="Simon S."/>
            <person name="Harris B."/>
            <person name="Atkin R."/>
            <person name="Doggett J."/>
            <person name="Mayes R."/>
            <person name="Keating L."/>
            <person name="Wheeler P.R."/>
            <person name="Parkhill J."/>
            <person name="Barrell B.G."/>
            <person name="Cole S.T."/>
            <person name="Gordon S.V."/>
            <person name="Hewinson R.G."/>
        </authorList>
    </citation>
    <scope>NUCLEOTIDE SEQUENCE [LARGE SCALE GENOMIC DNA]</scope>
    <source>
        <strain>ATCC BAA-935 / AF2122/97</strain>
    </source>
</reference>
<reference key="2">
    <citation type="journal article" date="2017" name="Genome Announc.">
        <title>Updated reference genome sequence and annotation of Mycobacterium bovis AF2122/97.</title>
        <authorList>
            <person name="Malone K.M."/>
            <person name="Farrell D."/>
            <person name="Stuber T.P."/>
            <person name="Schubert O.T."/>
            <person name="Aebersold R."/>
            <person name="Robbe-Austerman S."/>
            <person name="Gordon S.V."/>
        </authorList>
    </citation>
    <scope>NUCLEOTIDE SEQUENCE [LARGE SCALE GENOMIC DNA]</scope>
    <scope>GENOME REANNOTATION</scope>
    <source>
        <strain>ATCC BAA-935 / AF2122/97</strain>
    </source>
</reference>
<accession>P64914</accession>
<accession>A0A1R3XZW4</accession>
<accession>Q10865</accession>
<accession>X2BJS9</accession>
<gene>
    <name type="ordered locus">BQ2027_MB2016C</name>
</gene>